<feature type="chain" id="PRO_0000050470" description="Probable inorganic phosphate transporter 1-3">
    <location>
        <begin position="1"/>
        <end position="521"/>
    </location>
</feature>
<feature type="topological domain" description="Cytoplasmic" evidence="2">
    <location>
        <begin position="1"/>
        <end position="24"/>
    </location>
</feature>
<feature type="transmembrane region" description="Helical" evidence="2">
    <location>
        <begin position="25"/>
        <end position="45"/>
    </location>
</feature>
<feature type="topological domain" description="Extracellular" evidence="2">
    <location>
        <begin position="46"/>
        <end position="70"/>
    </location>
</feature>
<feature type="transmembrane region" description="Helical" evidence="2">
    <location>
        <begin position="71"/>
        <end position="91"/>
    </location>
</feature>
<feature type="topological domain" description="Cytoplasmic" evidence="2">
    <location>
        <begin position="92"/>
        <end position="99"/>
    </location>
</feature>
<feature type="transmembrane region" description="Helical" evidence="2">
    <location>
        <begin position="100"/>
        <end position="120"/>
    </location>
</feature>
<feature type="topological domain" description="Extracellular" evidence="2">
    <location>
        <begin position="121"/>
        <end position="131"/>
    </location>
</feature>
<feature type="transmembrane region" description="Helical" evidence="2">
    <location>
        <begin position="132"/>
        <end position="152"/>
    </location>
</feature>
<feature type="topological domain" description="Cytoplasmic" evidence="2">
    <location>
        <begin position="153"/>
        <end position="161"/>
    </location>
</feature>
<feature type="transmembrane region" description="Helical" evidence="2">
    <location>
        <begin position="162"/>
        <end position="182"/>
    </location>
</feature>
<feature type="topological domain" description="Extracellular" evidence="2">
    <location>
        <begin position="183"/>
        <end position="211"/>
    </location>
</feature>
<feature type="transmembrane region" description="Helical" evidence="2">
    <location>
        <begin position="212"/>
        <end position="232"/>
    </location>
</feature>
<feature type="topological domain" description="Cytoplasmic" evidence="2">
    <location>
        <begin position="233"/>
        <end position="292"/>
    </location>
</feature>
<feature type="transmembrane region" description="Helical" evidence="2">
    <location>
        <begin position="293"/>
        <end position="313"/>
    </location>
</feature>
<feature type="topological domain" description="Extracellular" evidence="2">
    <location>
        <begin position="314"/>
        <end position="348"/>
    </location>
</feature>
<feature type="transmembrane region" description="Helical" evidence="2">
    <location>
        <begin position="349"/>
        <end position="369"/>
    </location>
</feature>
<feature type="topological domain" description="Cytoplasmic" evidence="2">
    <location>
        <begin position="370"/>
        <end position="371"/>
    </location>
</feature>
<feature type="transmembrane region" description="Helical" evidence="2">
    <location>
        <begin position="372"/>
        <end position="392"/>
    </location>
</feature>
<feature type="topological domain" description="Extracellular" evidence="2">
    <location>
        <begin position="393"/>
        <end position="402"/>
    </location>
</feature>
<feature type="transmembrane region" description="Helical" evidence="2">
    <location>
        <begin position="403"/>
        <end position="423"/>
    </location>
</feature>
<feature type="topological domain" description="Cytoplasmic" evidence="2">
    <location>
        <begin position="424"/>
        <end position="441"/>
    </location>
</feature>
<feature type="transmembrane region" description="Helical" evidence="2">
    <location>
        <begin position="442"/>
        <end position="462"/>
    </location>
</feature>
<feature type="topological domain" description="Extracellular" evidence="2">
    <location>
        <begin position="463"/>
        <end position="484"/>
    </location>
</feature>
<feature type="transmembrane region" description="Helical" evidence="2">
    <location>
        <begin position="485"/>
        <end position="505"/>
    </location>
</feature>
<feature type="topological domain" description="Cytoplasmic" evidence="2">
    <location>
        <begin position="506"/>
        <end position="521"/>
    </location>
</feature>
<feature type="sequence conflict" description="In Ref. 1; AAB69122." evidence="4" ref="1">
    <original>G</original>
    <variation>R</variation>
    <location>
        <position position="175"/>
    </location>
</feature>
<reference key="1">
    <citation type="online journal article" date="1997" name="Plant Gene Register">
        <title>AtPT4: a fourth member of the Arabidopsis phosphate transporter gene family.</title>
        <authorList>
            <person name="Lu Y.-P."/>
            <person name="Zhen R.-G."/>
            <person name="Rea P.A."/>
        </authorList>
        <locator>PGR97-082</locator>
    </citation>
    <scope>NUCLEOTIDE SEQUENCE [GENOMIC DNA]</scope>
</reference>
<reference key="2">
    <citation type="journal article" date="1997" name="Soil Sci. Plant Nutr.">
        <title>High-affinity phosphate transporter genes of Arabidopsis thaliana.</title>
        <authorList>
            <person name="Mitsukawa N."/>
            <person name="Okumura S."/>
            <person name="Shibata D."/>
        </authorList>
    </citation>
    <scope>NUCLEOTIDE SEQUENCE [GENOMIC DNA]</scope>
    <source>
        <strain>cv. Columbia</strain>
    </source>
</reference>
<reference key="3">
    <citation type="journal article" date="2000" name="DNA Res.">
        <title>Structural analysis of Arabidopsis thaliana chromosome 5. X. Sequence features of the regions of 3,076,755 bp covered by sixty P1 and TAC clones.</title>
        <authorList>
            <person name="Sato S."/>
            <person name="Nakamura Y."/>
            <person name="Kaneko T."/>
            <person name="Katoh T."/>
            <person name="Asamizu E."/>
            <person name="Kotani H."/>
            <person name="Tabata S."/>
        </authorList>
    </citation>
    <scope>NUCLEOTIDE SEQUENCE [LARGE SCALE GENOMIC DNA]</scope>
    <source>
        <strain>cv. Columbia</strain>
    </source>
</reference>
<reference key="4">
    <citation type="journal article" date="2017" name="Plant J.">
        <title>Araport11: a complete reannotation of the Arabidopsis thaliana reference genome.</title>
        <authorList>
            <person name="Cheng C.Y."/>
            <person name="Krishnakumar V."/>
            <person name="Chan A.P."/>
            <person name="Thibaud-Nissen F."/>
            <person name="Schobel S."/>
            <person name="Town C.D."/>
        </authorList>
    </citation>
    <scope>GENOME REANNOTATION</scope>
    <source>
        <strain>cv. Columbia</strain>
    </source>
</reference>
<reference key="5">
    <citation type="journal article" date="2002" name="Plant J.">
        <title>Expression analysis suggests novel roles for members of the Pht1 family of phosphate transporters in Arabidopsis.</title>
        <authorList>
            <person name="Mudge S.R."/>
            <person name="Rae A.L."/>
            <person name="Diatloff E."/>
            <person name="Smith F.W."/>
        </authorList>
    </citation>
    <scope>INDUCTION</scope>
    <scope>TISSUE SPECIFICITY</scope>
    <scope>GENE FAMILY</scope>
    <scope>NOMENCLATURE</scope>
</reference>
<organism>
    <name type="scientific">Arabidopsis thaliana</name>
    <name type="common">Mouse-ear cress</name>
    <dbReference type="NCBI Taxonomy" id="3702"/>
    <lineage>
        <taxon>Eukaryota</taxon>
        <taxon>Viridiplantae</taxon>
        <taxon>Streptophyta</taxon>
        <taxon>Embryophyta</taxon>
        <taxon>Tracheophyta</taxon>
        <taxon>Spermatophyta</taxon>
        <taxon>Magnoliopsida</taxon>
        <taxon>eudicotyledons</taxon>
        <taxon>Gunneridae</taxon>
        <taxon>Pentapetalae</taxon>
        <taxon>rosids</taxon>
        <taxon>malvids</taxon>
        <taxon>Brassicales</taxon>
        <taxon>Brassicaceae</taxon>
        <taxon>Camelineae</taxon>
        <taxon>Arabidopsis</taxon>
    </lineage>
</organism>
<gene>
    <name type="primary">PHT1-3</name>
    <name type="synonym">PHT3</name>
    <name type="synonym">PT4</name>
    <name type="ordered locus">At5g43360</name>
    <name type="ORF">MWF20.5</name>
</gene>
<sequence length="521" mass="57257">MADQQLGVLKALDVAKTQLYHFTAIVIAGMGFFTDAYDLFCVSLVTKLLGRLYYFNPTSAKPGSLPPHVAAAVNGVALCGTLAGQLFFGWLGDKLGRKKVYGITLIMMILCSVASGLSLGNSAKGVMTTLCFFRFWLGFGIGGDYPLSATIMSEYANKKTRGAFIAAVFAMQGVGILAGGFVALAVSSIFDKKFPSPTYEQDRFLSTPPQADYIWRIIVMFGALPAALTYYWRMKMPETARYTALVAKNIKQATADMSKVLQTDLELEERVEDDVKDPKKNYGLFSKEFLRRHGLHLLGTTSTWFLLDIAFYSQNLFQKDIFSAIGWIPKAATMNAIHEVFKIARAQTLIALCSTVPGYWFTVAFIDIIGRFAIQLMGFFMMTVFMFAIAFPYNHWILPDNRIGFVVMYSLTFFFANFGPNATTFIVPAEIFPARLRSTCHGISAATGKAGAIVGAFGFLYAAQPQDKTKTDAGYPPGIGVKNSLIMLGVINFVGMLFTFLVPEPKGKSLEELSGEAEVDK</sequence>
<comment type="function">
    <text evidence="1">High-affinity transporter for external inorganic phosphate.</text>
</comment>
<comment type="subcellular location">
    <subcellularLocation>
        <location evidence="1">Membrane</location>
        <topology evidence="1">Multi-pass membrane protein</topology>
    </subcellularLocation>
</comment>
<comment type="tissue specificity">
    <text evidence="3">Mainly expressed in roots, especially in the stele of the primary root, the pericycle and trichoblasts of secondary roots. To a lower extent, present in hydathodes and vascular tissues of young leaves.</text>
</comment>
<comment type="induction">
    <text evidence="3">In roots by phosphate starvation.</text>
</comment>
<comment type="miscellaneous">
    <text>Although related to the sugar transporter family, it does not transport sugars.</text>
</comment>
<comment type="similarity">
    <text evidence="4">Belongs to the major facilitator superfamily. Phosphate:H(+) symporter (TC 2.A.1.9) family.</text>
</comment>
<keyword id="KW-0472">Membrane</keyword>
<keyword id="KW-0592">Phosphate transport</keyword>
<keyword id="KW-1185">Reference proteome</keyword>
<keyword id="KW-0769">Symport</keyword>
<keyword id="KW-0812">Transmembrane</keyword>
<keyword id="KW-1133">Transmembrane helix</keyword>
<keyword id="KW-0813">Transport</keyword>
<protein>
    <recommendedName>
        <fullName>Probable inorganic phosphate transporter 1-3</fullName>
        <shortName>AtPht1;3</shortName>
    </recommendedName>
    <alternativeName>
        <fullName>H(+)/Pi cotransporter</fullName>
    </alternativeName>
</protein>
<accession>O48639</accession>
<accession>O04381</accession>
<dbReference type="EMBL" id="U97546">
    <property type="protein sequence ID" value="AAB69122.1"/>
    <property type="molecule type" value="Genomic_DNA"/>
</dbReference>
<dbReference type="EMBL" id="AB000094">
    <property type="protein sequence ID" value="BAA24281.1"/>
    <property type="molecule type" value="Genomic_DNA"/>
</dbReference>
<dbReference type="EMBL" id="AB025638">
    <property type="protein sequence ID" value="BAA97415.1"/>
    <property type="molecule type" value="Genomic_DNA"/>
</dbReference>
<dbReference type="EMBL" id="CP002688">
    <property type="protein sequence ID" value="AED94949.1"/>
    <property type="molecule type" value="Genomic_DNA"/>
</dbReference>
<dbReference type="RefSeq" id="NP_199150.1">
    <property type="nucleotide sequence ID" value="NM_123702.1"/>
</dbReference>
<dbReference type="SMR" id="O48639"/>
<dbReference type="FunCoup" id="O48639">
    <property type="interactions" value="352"/>
</dbReference>
<dbReference type="STRING" id="3702.O48639"/>
<dbReference type="PaxDb" id="3702-AT5G43360.1"/>
<dbReference type="ProteomicsDB" id="236791"/>
<dbReference type="EnsemblPlants" id="AT5G43360.1">
    <property type="protein sequence ID" value="AT5G43360.1"/>
    <property type="gene ID" value="AT5G43360"/>
</dbReference>
<dbReference type="GeneID" id="834354"/>
<dbReference type="Gramene" id="AT5G43360.1">
    <property type="protein sequence ID" value="AT5G43360.1"/>
    <property type="gene ID" value="AT5G43360"/>
</dbReference>
<dbReference type="KEGG" id="ath:AT5G43360"/>
<dbReference type="Araport" id="AT5G43360"/>
<dbReference type="TAIR" id="AT5G43360">
    <property type="gene designation" value="PHT1"/>
</dbReference>
<dbReference type="eggNOG" id="KOG0252">
    <property type="taxonomic scope" value="Eukaryota"/>
</dbReference>
<dbReference type="HOGENOM" id="CLU_001265_46_14_1"/>
<dbReference type="InParanoid" id="O48639"/>
<dbReference type="OMA" id="IYYTHEG"/>
<dbReference type="PhylomeDB" id="O48639"/>
<dbReference type="PRO" id="PR:O48639"/>
<dbReference type="Proteomes" id="UP000006548">
    <property type="component" value="Chromosome 5"/>
</dbReference>
<dbReference type="ExpressionAtlas" id="O48639">
    <property type="expression patterns" value="baseline and differential"/>
</dbReference>
<dbReference type="GO" id="GO:0005886">
    <property type="term" value="C:plasma membrane"/>
    <property type="evidence" value="ECO:0007005"/>
    <property type="project" value="TAIR"/>
</dbReference>
<dbReference type="GO" id="GO:0005315">
    <property type="term" value="F:phosphate transmembrane transporter activity"/>
    <property type="evidence" value="ECO:0000250"/>
    <property type="project" value="TAIR"/>
</dbReference>
<dbReference type="GO" id="GO:0015293">
    <property type="term" value="F:symporter activity"/>
    <property type="evidence" value="ECO:0007669"/>
    <property type="project" value="UniProtKB-KW"/>
</dbReference>
<dbReference type="GO" id="GO:0006817">
    <property type="term" value="P:phosphate ion transport"/>
    <property type="evidence" value="ECO:0007669"/>
    <property type="project" value="UniProtKB-KW"/>
</dbReference>
<dbReference type="CDD" id="cd17364">
    <property type="entry name" value="MFS_PhT"/>
    <property type="match status" value="1"/>
</dbReference>
<dbReference type="FunFam" id="1.20.1250.20:FF:000175">
    <property type="entry name" value="Inorganic phosphate transporter 1-6"/>
    <property type="match status" value="1"/>
</dbReference>
<dbReference type="Gene3D" id="1.20.1250.20">
    <property type="entry name" value="MFS general substrate transporter like domains"/>
    <property type="match status" value="1"/>
</dbReference>
<dbReference type="InterPro" id="IPR020846">
    <property type="entry name" value="MFS_dom"/>
</dbReference>
<dbReference type="InterPro" id="IPR005828">
    <property type="entry name" value="MFS_sugar_transport-like"/>
</dbReference>
<dbReference type="InterPro" id="IPR036259">
    <property type="entry name" value="MFS_trans_sf"/>
</dbReference>
<dbReference type="InterPro" id="IPR004738">
    <property type="entry name" value="Phos_permease"/>
</dbReference>
<dbReference type="NCBIfam" id="TIGR00887">
    <property type="entry name" value="2A0109"/>
    <property type="match status" value="1"/>
</dbReference>
<dbReference type="PANTHER" id="PTHR24064">
    <property type="entry name" value="SOLUTE CARRIER FAMILY 22 MEMBER"/>
    <property type="match status" value="1"/>
</dbReference>
<dbReference type="Pfam" id="PF00083">
    <property type="entry name" value="Sugar_tr"/>
    <property type="match status" value="1"/>
</dbReference>
<dbReference type="SUPFAM" id="SSF103473">
    <property type="entry name" value="MFS general substrate transporter"/>
    <property type="match status" value="1"/>
</dbReference>
<dbReference type="PROSITE" id="PS50850">
    <property type="entry name" value="MFS"/>
    <property type="match status" value="1"/>
</dbReference>
<proteinExistence type="evidence at transcript level"/>
<evidence type="ECO:0000250" key="1"/>
<evidence type="ECO:0000255" key="2"/>
<evidence type="ECO:0000269" key="3">
    <source>
    </source>
</evidence>
<evidence type="ECO:0000305" key="4"/>
<name>PHT13_ARATH</name>